<organism>
    <name type="scientific">Schizosaccharomyces pombe (strain 972 / ATCC 24843)</name>
    <name type="common">Fission yeast</name>
    <dbReference type="NCBI Taxonomy" id="284812"/>
    <lineage>
        <taxon>Eukaryota</taxon>
        <taxon>Fungi</taxon>
        <taxon>Dikarya</taxon>
        <taxon>Ascomycota</taxon>
        <taxon>Taphrinomycotina</taxon>
        <taxon>Schizosaccharomycetes</taxon>
        <taxon>Schizosaccharomycetales</taxon>
        <taxon>Schizosaccharomycetaceae</taxon>
        <taxon>Schizosaccharomyces</taxon>
    </lineage>
</organism>
<geneLocation type="mitochondrion"/>
<protein>
    <recommendedName>
        <fullName>ATP synthase protein 8</fullName>
    </recommendedName>
    <alternativeName>
        <fullName>A6L</fullName>
    </alternativeName>
    <alternativeName>
        <fullName>F-ATPase subunit 8</fullName>
    </alternativeName>
</protein>
<gene>
    <name type="primary">atp8</name>
    <name type="ORF">SPMIT.09</name>
</gene>
<name>ATP8_SCHPO</name>
<proteinExistence type="inferred from homology"/>
<reference key="1">
    <citation type="book" date="1993" name="Genetic Maps (6th edition)">
        <title>The mitochondrial genome of Schizosaccharomyces pombe.</title>
        <editorList>
            <person name="O'Brien S.J."/>
        </editorList>
        <authorList>
            <person name="Lang B.F."/>
        </authorList>
    </citation>
    <scope>NUCLEOTIDE SEQUENCE [LARGE SCALE GENOMIC DNA]</scope>
    <source>
        <strain>AD7-50</strain>
    </source>
</reference>
<reference key="2">
    <citation type="journal article" date="2000" name="Genes Cells">
        <title>Large-scale screening of intracellular protein localization in living fission yeast cells by the use of a GFP-fusion genomic DNA library.</title>
        <authorList>
            <person name="Ding D.-Q."/>
            <person name="Tomita Y."/>
            <person name="Yamamoto A."/>
            <person name="Chikashige Y."/>
            <person name="Haraguchi T."/>
            <person name="Hiraoka Y."/>
        </authorList>
    </citation>
    <scope>NUCLEOTIDE SEQUENCE [LARGE SCALE GENOMIC DNA] OF 1-43</scope>
    <source>
        <strain>ATCC 38364 / 968</strain>
    </source>
</reference>
<sequence>MPQLVPFYFINILSFGFLIFTVLLYISSVYVLPRYNELFISRSIISSL</sequence>
<evidence type="ECO:0000250" key="1"/>
<evidence type="ECO:0000255" key="2"/>
<evidence type="ECO:0000305" key="3"/>
<dbReference type="EMBL" id="X54421">
    <property type="protein sequence ID" value="CAA38291.1"/>
    <property type="molecule type" value="Genomic_DNA"/>
</dbReference>
<dbReference type="EMBL" id="AB027775">
    <property type="protein sequence ID" value="BAA87079.1"/>
    <property type="molecule type" value="Genomic_DNA"/>
</dbReference>
<dbReference type="PIR" id="S78202">
    <property type="entry name" value="S78202"/>
</dbReference>
<dbReference type="RefSeq" id="NP_039506.1">
    <property type="nucleotide sequence ID" value="NC_001326.1"/>
</dbReference>
<dbReference type="SMR" id="P21536"/>
<dbReference type="ComplexPortal" id="CPX-25764">
    <property type="entry name" value="Mitochondrial proton translocating ATP synthase complex"/>
</dbReference>
<dbReference type="FunCoup" id="P21536">
    <property type="interactions" value="73"/>
</dbReference>
<dbReference type="STRING" id="284812.P21536"/>
<dbReference type="PaxDb" id="4896-SPMIT.09.1"/>
<dbReference type="EnsemblFungi" id="SPMIT.09.1">
    <property type="protein sequence ID" value="SPMIT.09.1:pep"/>
    <property type="gene ID" value="SPMIT.09"/>
</dbReference>
<dbReference type="PomBase" id="SPMIT.09">
    <property type="gene designation" value="atp8"/>
</dbReference>
<dbReference type="VEuPathDB" id="FungiDB:SPMIT.09"/>
<dbReference type="HOGENOM" id="CLU_214588_0_0_1"/>
<dbReference type="InParanoid" id="P21536"/>
<dbReference type="PhylomeDB" id="P21536"/>
<dbReference type="PRO" id="PR:P21536"/>
<dbReference type="Proteomes" id="UP000002485">
    <property type="component" value="Mitochondrion"/>
</dbReference>
<dbReference type="GO" id="GO:0099617">
    <property type="term" value="C:matrix side of mitochondrial inner membrane"/>
    <property type="evidence" value="ECO:0000305"/>
    <property type="project" value="PomBase"/>
</dbReference>
<dbReference type="GO" id="GO:0045259">
    <property type="term" value="C:proton-transporting ATP synthase complex"/>
    <property type="evidence" value="ECO:0007669"/>
    <property type="project" value="UniProtKB-KW"/>
</dbReference>
<dbReference type="GO" id="GO:0015078">
    <property type="term" value="F:proton transmembrane transporter activity"/>
    <property type="evidence" value="ECO:0007669"/>
    <property type="project" value="InterPro"/>
</dbReference>
<dbReference type="GO" id="GO:0015986">
    <property type="term" value="P:proton motive force-driven ATP synthesis"/>
    <property type="evidence" value="ECO:0000318"/>
    <property type="project" value="GO_Central"/>
</dbReference>
<dbReference type="GO" id="GO:0042776">
    <property type="term" value="P:proton motive force-driven mitochondrial ATP synthesis"/>
    <property type="evidence" value="ECO:0000266"/>
    <property type="project" value="PomBase"/>
</dbReference>
<dbReference type="InterPro" id="IPR009230">
    <property type="entry name" value="ATP_synth_su8_fun"/>
</dbReference>
<dbReference type="PANTHER" id="PTHR36101">
    <property type="entry name" value="ATP SYNTHASE PROTEIN 8"/>
    <property type="match status" value="1"/>
</dbReference>
<dbReference type="PANTHER" id="PTHR36101:SF1">
    <property type="entry name" value="ATP SYNTHASE PROTEIN 8"/>
    <property type="match status" value="1"/>
</dbReference>
<dbReference type="Pfam" id="PF05933">
    <property type="entry name" value="Fun_ATP-synt_8"/>
    <property type="match status" value="1"/>
</dbReference>
<comment type="function">
    <text evidence="1">Mitochondrial membrane ATP synthase (F(1)F(0) ATP synthase or Complex V) produces ATP from ADP in the presence of a proton gradient across the membrane which is generated by electron transport complexes of the respiratory chain. F-type ATPases consist of two structural domains, F(1) - containing the extramembraneous catalytic core and F(0) - containing the membrane proton channel, linked together by a central stalk and a peripheral stalk. During catalysis, ATP synthesis in the catalytic domain of F(1) is coupled via a rotary mechanism of the central stalk subunits to proton translocation. Part of the complex F(0) domain. Minor subunit located with subunit a in the membrane (By similarity).</text>
</comment>
<comment type="subunit">
    <text evidence="1">F-type ATPases have 2 components, CF(1) - the catalytic core - and CF(0) - the membrane proton channel.</text>
</comment>
<comment type="subcellular location">
    <subcellularLocation>
        <location>Mitochondrion membrane</location>
        <topology>Single-pass membrane protein</topology>
    </subcellularLocation>
</comment>
<comment type="similarity">
    <text evidence="3">Belongs to the ATPase protein 8 family.</text>
</comment>
<accession>P21536</accession>
<accession>Q9UU72</accession>
<feature type="chain" id="PRO_0000195604" description="ATP synthase protein 8">
    <location>
        <begin position="1"/>
        <end position="48"/>
    </location>
</feature>
<feature type="transmembrane region" description="Helical" evidence="2">
    <location>
        <begin position="4"/>
        <end position="24"/>
    </location>
</feature>
<keyword id="KW-0066">ATP synthesis</keyword>
<keyword id="KW-0138">CF(0)</keyword>
<keyword id="KW-0375">Hydrogen ion transport</keyword>
<keyword id="KW-0406">Ion transport</keyword>
<keyword id="KW-0472">Membrane</keyword>
<keyword id="KW-0496">Mitochondrion</keyword>
<keyword id="KW-1185">Reference proteome</keyword>
<keyword id="KW-0812">Transmembrane</keyword>
<keyword id="KW-1133">Transmembrane helix</keyword>
<keyword id="KW-0813">Transport</keyword>